<protein>
    <recommendedName>
        <fullName>Uncharacterized protein MJ1282.1</fullName>
    </recommendedName>
</protein>
<organism>
    <name type="scientific">Methanocaldococcus jannaschii (strain ATCC 43067 / DSM 2661 / JAL-1 / JCM 10045 / NBRC 100440)</name>
    <name type="common">Methanococcus jannaschii</name>
    <dbReference type="NCBI Taxonomy" id="243232"/>
    <lineage>
        <taxon>Archaea</taxon>
        <taxon>Methanobacteriati</taxon>
        <taxon>Methanobacteriota</taxon>
        <taxon>Methanomada group</taxon>
        <taxon>Methanococci</taxon>
        <taxon>Methanococcales</taxon>
        <taxon>Methanocaldococcaceae</taxon>
        <taxon>Methanocaldococcus</taxon>
    </lineage>
</organism>
<comment type="subcellular location">
    <subcellularLocation>
        <location evidence="2">Cell membrane</location>
        <topology evidence="2">Multi-pass membrane protein</topology>
    </subcellularLocation>
</comment>
<comment type="similarity">
    <text evidence="2">To M.jannaschii MJ0902.</text>
</comment>
<gene>
    <name type="ordered locus">MJ1282.1</name>
</gene>
<sequence length="254" mass="29965">MDLGYLYGLICSIYGAVEDWRKREVTDFLWISMLWVGVFIHLLYNKSLLLFFIEIFAVLFITLSVRYEKFNKLVYIGVFLFLLSFILFKSYFALSFLVFYLIGIFLYYLNFMGGGDCKFLMGLSYLKGMFFTFIIFLNAILFVIPYCIFILLINLKNGNHKRLKLKNLPLLFIALKKDIDKVKKFETIMGDDENLSLIPNINEEKEEKKTYKGKVWVTPQLPFLVFICLSYILYIVSPFPLIFKVIELVIKSHF</sequence>
<dbReference type="EMBL" id="L77117">
    <property type="protein sequence ID" value="AAB99298.1"/>
    <property type="molecule type" value="Genomic_DNA"/>
</dbReference>
<dbReference type="RefSeq" id="WP_010870796.1">
    <property type="nucleotide sequence ID" value="NC_000909.1"/>
</dbReference>
<dbReference type="STRING" id="243232.MJ_1282.1"/>
<dbReference type="PaxDb" id="243232-MJ_1282.1"/>
<dbReference type="EnsemblBacteria" id="AAB99298">
    <property type="protein sequence ID" value="AAB99298"/>
    <property type="gene ID" value="MJ_1282.1"/>
</dbReference>
<dbReference type="GeneID" id="1452181"/>
<dbReference type="KEGG" id="mja:MJ_1282.1"/>
<dbReference type="eggNOG" id="arCOG02298">
    <property type="taxonomic scope" value="Archaea"/>
</dbReference>
<dbReference type="HOGENOM" id="CLU_999708_0_0_2"/>
<dbReference type="InParanoid" id="P81318"/>
<dbReference type="OrthoDB" id="19094at2157"/>
<dbReference type="PhylomeDB" id="P81318"/>
<dbReference type="Proteomes" id="UP000000805">
    <property type="component" value="Chromosome"/>
</dbReference>
<dbReference type="GO" id="GO:0005886">
    <property type="term" value="C:plasma membrane"/>
    <property type="evidence" value="ECO:0007669"/>
    <property type="project" value="UniProtKB-SubCell"/>
</dbReference>
<dbReference type="GO" id="GO:0004190">
    <property type="term" value="F:aspartic-type endopeptidase activity"/>
    <property type="evidence" value="ECO:0007669"/>
    <property type="project" value="InterPro"/>
</dbReference>
<dbReference type="Gene3D" id="6.10.250.3240">
    <property type="match status" value="1"/>
</dbReference>
<dbReference type="InterPro" id="IPR052218">
    <property type="entry name" value="Preflagellin_Peptidase"/>
</dbReference>
<dbReference type="InterPro" id="IPR000045">
    <property type="entry name" value="Prepilin_IV_endopep_pep"/>
</dbReference>
<dbReference type="PANTHER" id="PTHR36506">
    <property type="entry name" value="PREFLAGELLIN PEPTIDASE"/>
    <property type="match status" value="1"/>
</dbReference>
<dbReference type="PANTHER" id="PTHR36506:SF1">
    <property type="entry name" value="PREFLAGELLIN PEPTIDASE"/>
    <property type="match status" value="1"/>
</dbReference>
<dbReference type="Pfam" id="PF01478">
    <property type="entry name" value="Peptidase_A24"/>
    <property type="match status" value="2"/>
</dbReference>
<feature type="chain" id="PRO_0000107250" description="Uncharacterized protein MJ1282.1">
    <location>
        <begin position="1"/>
        <end position="254"/>
    </location>
</feature>
<feature type="transmembrane region" description="Helical" evidence="1">
    <location>
        <begin position="33"/>
        <end position="53"/>
    </location>
</feature>
<feature type="transmembrane region" description="Helical" evidence="1">
    <location>
        <begin position="70"/>
        <end position="90"/>
    </location>
</feature>
<feature type="transmembrane region" description="Helical" evidence="1">
    <location>
        <begin position="92"/>
        <end position="112"/>
    </location>
</feature>
<feature type="transmembrane region" description="Helical" evidence="1">
    <location>
        <begin position="133"/>
        <end position="153"/>
    </location>
</feature>
<feature type="transmembrane region" description="Helical" evidence="1">
    <location>
        <begin position="223"/>
        <end position="243"/>
    </location>
</feature>
<proteinExistence type="predicted"/>
<name>YC8A_METJA</name>
<accession>P81318</accession>
<evidence type="ECO:0000255" key="1"/>
<evidence type="ECO:0000305" key="2"/>
<keyword id="KW-1003">Cell membrane</keyword>
<keyword id="KW-0472">Membrane</keyword>
<keyword id="KW-1185">Reference proteome</keyword>
<keyword id="KW-0812">Transmembrane</keyword>
<keyword id="KW-1133">Transmembrane helix</keyword>
<reference key="1">
    <citation type="journal article" date="1996" name="Science">
        <title>Complete genome sequence of the methanogenic archaeon, Methanococcus jannaschii.</title>
        <authorList>
            <person name="Bult C.J."/>
            <person name="White O."/>
            <person name="Olsen G.J."/>
            <person name="Zhou L."/>
            <person name="Fleischmann R.D."/>
            <person name="Sutton G.G."/>
            <person name="Blake J.A."/>
            <person name="FitzGerald L.M."/>
            <person name="Clayton R.A."/>
            <person name="Gocayne J.D."/>
            <person name="Kerlavage A.R."/>
            <person name="Dougherty B.A."/>
            <person name="Tomb J.-F."/>
            <person name="Adams M.D."/>
            <person name="Reich C.I."/>
            <person name="Overbeek R."/>
            <person name="Kirkness E.F."/>
            <person name="Weinstock K.G."/>
            <person name="Merrick J.M."/>
            <person name="Glodek A."/>
            <person name="Scott J.L."/>
            <person name="Geoghagen N.S.M."/>
            <person name="Weidman J.F."/>
            <person name="Fuhrmann J.L."/>
            <person name="Nguyen D."/>
            <person name="Utterback T.R."/>
            <person name="Kelley J.M."/>
            <person name="Peterson J.D."/>
            <person name="Sadow P.W."/>
            <person name="Hanna M.C."/>
            <person name="Cotton M.D."/>
            <person name="Roberts K.M."/>
            <person name="Hurst M.A."/>
            <person name="Kaine B.P."/>
            <person name="Borodovsky M."/>
            <person name="Klenk H.-P."/>
            <person name="Fraser C.M."/>
            <person name="Smith H.O."/>
            <person name="Woese C.R."/>
            <person name="Venter J.C."/>
        </authorList>
    </citation>
    <scope>NUCLEOTIDE SEQUENCE [LARGE SCALE GENOMIC DNA]</scope>
    <source>
        <strain>ATCC 43067 / DSM 2661 / JAL-1 / JCM 10045 / NBRC 100440</strain>
    </source>
</reference>